<accession>Q8KJ13</accession>
<sequence length="93" mass="9755">MLKPLGDRVVLEVEEKEQKVGGFVIAGAGQDATKTAKVVAVGEGIRTLNGELVAPSVKAGDTVLVESHVGTEVKDGEEKYLVVNEVNILAIVE</sequence>
<reference key="1">
    <citation type="submission" date="2001-06" db="EMBL/GenBank/DDBJ databases">
        <title>The groESL genes of Streptococcus intermedius.</title>
        <authorList>
            <person name="Teng L.-J."/>
        </authorList>
    </citation>
    <scope>NUCLEOTIDE SEQUENCE [GENOMIC DNA]</scope>
</reference>
<name>CH10_STRIT</name>
<feature type="chain" id="PRO_0000174861" description="Co-chaperonin GroES">
    <location>
        <begin position="1"/>
        <end position="93"/>
    </location>
</feature>
<organism>
    <name type="scientific">Streptococcus intermedius</name>
    <dbReference type="NCBI Taxonomy" id="1338"/>
    <lineage>
        <taxon>Bacteria</taxon>
        <taxon>Bacillati</taxon>
        <taxon>Bacillota</taxon>
        <taxon>Bacilli</taxon>
        <taxon>Lactobacillales</taxon>
        <taxon>Streptococcaceae</taxon>
        <taxon>Streptococcus</taxon>
        <taxon>Streptococcus anginosus group</taxon>
    </lineage>
</organism>
<evidence type="ECO:0000255" key="1">
    <source>
        <dbReference type="HAMAP-Rule" id="MF_00580"/>
    </source>
</evidence>
<dbReference type="EMBL" id="AF389515">
    <property type="protein sequence ID" value="AAM73643.1"/>
    <property type="molecule type" value="Genomic_DNA"/>
</dbReference>
<dbReference type="RefSeq" id="WP_003074100.1">
    <property type="nucleotide sequence ID" value="NZ_RJOR01000007.1"/>
</dbReference>
<dbReference type="SMR" id="Q8KJ13"/>
<dbReference type="STRING" id="1338.A6J72_06925"/>
<dbReference type="GeneID" id="57845418"/>
<dbReference type="OMA" id="EDFLIMR"/>
<dbReference type="GO" id="GO:0005737">
    <property type="term" value="C:cytoplasm"/>
    <property type="evidence" value="ECO:0007669"/>
    <property type="project" value="UniProtKB-SubCell"/>
</dbReference>
<dbReference type="GO" id="GO:0005524">
    <property type="term" value="F:ATP binding"/>
    <property type="evidence" value="ECO:0007669"/>
    <property type="project" value="InterPro"/>
</dbReference>
<dbReference type="GO" id="GO:0046872">
    <property type="term" value="F:metal ion binding"/>
    <property type="evidence" value="ECO:0007669"/>
    <property type="project" value="TreeGrafter"/>
</dbReference>
<dbReference type="GO" id="GO:0044183">
    <property type="term" value="F:protein folding chaperone"/>
    <property type="evidence" value="ECO:0007669"/>
    <property type="project" value="InterPro"/>
</dbReference>
<dbReference type="GO" id="GO:0051087">
    <property type="term" value="F:protein-folding chaperone binding"/>
    <property type="evidence" value="ECO:0007669"/>
    <property type="project" value="TreeGrafter"/>
</dbReference>
<dbReference type="GO" id="GO:0051082">
    <property type="term" value="F:unfolded protein binding"/>
    <property type="evidence" value="ECO:0007669"/>
    <property type="project" value="TreeGrafter"/>
</dbReference>
<dbReference type="GO" id="GO:0051085">
    <property type="term" value="P:chaperone cofactor-dependent protein refolding"/>
    <property type="evidence" value="ECO:0007669"/>
    <property type="project" value="TreeGrafter"/>
</dbReference>
<dbReference type="CDD" id="cd00320">
    <property type="entry name" value="cpn10"/>
    <property type="match status" value="1"/>
</dbReference>
<dbReference type="FunFam" id="2.30.33.40:FF:000007">
    <property type="entry name" value="10 kDa chaperonin"/>
    <property type="match status" value="1"/>
</dbReference>
<dbReference type="Gene3D" id="2.30.33.40">
    <property type="entry name" value="GroES chaperonin"/>
    <property type="match status" value="1"/>
</dbReference>
<dbReference type="HAMAP" id="MF_00580">
    <property type="entry name" value="CH10"/>
    <property type="match status" value="1"/>
</dbReference>
<dbReference type="InterPro" id="IPR020818">
    <property type="entry name" value="Chaperonin_GroES"/>
</dbReference>
<dbReference type="InterPro" id="IPR037124">
    <property type="entry name" value="Chaperonin_GroES_sf"/>
</dbReference>
<dbReference type="InterPro" id="IPR018369">
    <property type="entry name" value="Chaprnonin_Cpn10_CS"/>
</dbReference>
<dbReference type="InterPro" id="IPR011032">
    <property type="entry name" value="GroES-like_sf"/>
</dbReference>
<dbReference type="NCBIfam" id="NF001528">
    <property type="entry name" value="PRK00364.1-4"/>
    <property type="match status" value="1"/>
</dbReference>
<dbReference type="PANTHER" id="PTHR10772">
    <property type="entry name" value="10 KDA HEAT SHOCK PROTEIN"/>
    <property type="match status" value="1"/>
</dbReference>
<dbReference type="PANTHER" id="PTHR10772:SF58">
    <property type="entry name" value="CO-CHAPERONIN GROES"/>
    <property type="match status" value="1"/>
</dbReference>
<dbReference type="Pfam" id="PF00166">
    <property type="entry name" value="Cpn10"/>
    <property type="match status" value="1"/>
</dbReference>
<dbReference type="PRINTS" id="PR00297">
    <property type="entry name" value="CHAPERONIN10"/>
</dbReference>
<dbReference type="SMART" id="SM00883">
    <property type="entry name" value="Cpn10"/>
    <property type="match status" value="1"/>
</dbReference>
<dbReference type="SUPFAM" id="SSF50129">
    <property type="entry name" value="GroES-like"/>
    <property type="match status" value="1"/>
</dbReference>
<dbReference type="PROSITE" id="PS00681">
    <property type="entry name" value="CHAPERONINS_CPN10"/>
    <property type="match status" value="1"/>
</dbReference>
<comment type="function">
    <text evidence="1">Together with the chaperonin GroEL, plays an essential role in assisting protein folding. The GroEL-GroES system forms a nano-cage that allows encapsulation of the non-native substrate proteins and provides a physical environment optimized to promote and accelerate protein folding. GroES binds to the apical surface of the GroEL ring, thereby capping the opening of the GroEL channel.</text>
</comment>
<comment type="subunit">
    <text evidence="1">Heptamer of 7 subunits arranged in a ring. Interacts with the chaperonin GroEL.</text>
</comment>
<comment type="subcellular location">
    <subcellularLocation>
        <location evidence="1">Cytoplasm</location>
    </subcellularLocation>
</comment>
<comment type="similarity">
    <text evidence="1">Belongs to the GroES chaperonin family.</text>
</comment>
<keyword id="KW-0143">Chaperone</keyword>
<keyword id="KW-0963">Cytoplasm</keyword>
<protein>
    <recommendedName>
        <fullName evidence="1">Co-chaperonin GroES</fullName>
    </recommendedName>
    <alternativeName>
        <fullName evidence="1">10 kDa chaperonin</fullName>
    </alternativeName>
    <alternativeName>
        <fullName evidence="1">Chaperonin-10</fullName>
        <shortName evidence="1">Cpn10</shortName>
    </alternativeName>
</protein>
<gene>
    <name evidence="1" type="primary">groES</name>
    <name evidence="1" type="synonym">groS</name>
</gene>
<proteinExistence type="inferred from homology"/>